<proteinExistence type="inferred from homology"/>
<gene>
    <name evidence="1" type="primary">add</name>
    <name type="ordered locus">MAP_3438c</name>
</gene>
<protein>
    <recommendedName>
        <fullName evidence="1">Adenosine deaminase</fullName>
        <ecNumber evidence="1">3.5.4.4</ecNumber>
    </recommendedName>
    <alternativeName>
        <fullName evidence="1">Adenosine aminohydrolase</fullName>
    </alternativeName>
</protein>
<sequence>MTAPLELEQIRKAPKALLHDHLDGGLRPSTVLDIAGQTGYDGLPATDVEELATWFRTRSHSGSLERYLEPFSHTVAVMQTPEALHRVAYECVEDLAEDSVVYAEIRFAPELHINRGMSFDEIVDAVLAGFADGEKACAAAGRPIVVRLLVTAMRHAAVSREIAELAIRWRDKGVVGFDIAGAEAGNPPTRHLEAFDYMRDHNARFTIHAGEAFGLPSIHEAIAFCGADRLGHGVRIVDDIDVLADGPDKGKVRLGRLANILRDKRIPLELCPSSNVQTGAVKSIADHPFDLLARTRFRVTVNTDNRLMSDTYMSREMHRLVQAFGYGWSDLERFTINAMKSAFIPFDERLAIIDEVIKPRYAVLIG</sequence>
<name>ADD_MYCPA</name>
<reference key="1">
    <citation type="journal article" date="2005" name="Proc. Natl. Acad. Sci. U.S.A.">
        <title>The complete genome sequence of Mycobacterium avium subspecies paratuberculosis.</title>
        <authorList>
            <person name="Li L."/>
            <person name="Bannantine J.P."/>
            <person name="Zhang Q."/>
            <person name="Amonsin A."/>
            <person name="May B.J."/>
            <person name="Alt D."/>
            <person name="Banerji N."/>
            <person name="Kanjilal S."/>
            <person name="Kapur V."/>
        </authorList>
    </citation>
    <scope>NUCLEOTIDE SEQUENCE [LARGE SCALE GENOMIC DNA]</scope>
    <source>
        <strain>ATCC BAA-968 / K-10</strain>
    </source>
</reference>
<accession>Q73UD0</accession>
<feature type="chain" id="PRO_1000017669" description="Adenosine deaminase">
    <location>
        <begin position="1"/>
        <end position="366"/>
    </location>
</feature>
<feature type="active site" description="Proton donor" evidence="1">
    <location>
        <position position="211"/>
    </location>
</feature>
<feature type="binding site" evidence="1">
    <location>
        <position position="19"/>
    </location>
    <ligand>
        <name>Zn(2+)</name>
        <dbReference type="ChEBI" id="CHEBI:29105"/>
        <note>catalytic</note>
    </ligand>
</feature>
<feature type="binding site" evidence="1">
    <location>
        <position position="21"/>
    </location>
    <ligand>
        <name>substrate</name>
    </ligand>
</feature>
<feature type="binding site" evidence="1">
    <location>
        <position position="21"/>
    </location>
    <ligand>
        <name>Zn(2+)</name>
        <dbReference type="ChEBI" id="CHEBI:29105"/>
        <note>catalytic</note>
    </ligand>
</feature>
<feature type="binding site" evidence="1">
    <location>
        <position position="23"/>
    </location>
    <ligand>
        <name>substrate</name>
    </ligand>
</feature>
<feature type="binding site" evidence="1">
    <location>
        <position position="181"/>
    </location>
    <ligand>
        <name>substrate</name>
    </ligand>
</feature>
<feature type="binding site" evidence="1">
    <location>
        <position position="208"/>
    </location>
    <ligand>
        <name>Zn(2+)</name>
        <dbReference type="ChEBI" id="CHEBI:29105"/>
        <note>catalytic</note>
    </ligand>
</feature>
<feature type="binding site" evidence="1">
    <location>
        <position position="304"/>
    </location>
    <ligand>
        <name>Zn(2+)</name>
        <dbReference type="ChEBI" id="CHEBI:29105"/>
        <note>catalytic</note>
    </ligand>
</feature>
<feature type="site" description="Important for catalytic activity" evidence="1">
    <location>
        <position position="232"/>
    </location>
</feature>
<dbReference type="EC" id="3.5.4.4" evidence="1"/>
<dbReference type="EMBL" id="AE016958">
    <property type="protein sequence ID" value="AAS05988.1"/>
    <property type="molecule type" value="Genomic_DNA"/>
</dbReference>
<dbReference type="RefSeq" id="WP_009978822.1">
    <property type="nucleotide sequence ID" value="NZ_CP106873.1"/>
</dbReference>
<dbReference type="SMR" id="Q73UD0"/>
<dbReference type="STRING" id="262316.MAP_3438c"/>
<dbReference type="KEGG" id="mpa:MAP_3438c"/>
<dbReference type="eggNOG" id="COG1816">
    <property type="taxonomic scope" value="Bacteria"/>
</dbReference>
<dbReference type="HOGENOM" id="CLU_039228_0_0_11"/>
<dbReference type="Proteomes" id="UP000000580">
    <property type="component" value="Chromosome"/>
</dbReference>
<dbReference type="GO" id="GO:0005829">
    <property type="term" value="C:cytosol"/>
    <property type="evidence" value="ECO:0007669"/>
    <property type="project" value="TreeGrafter"/>
</dbReference>
<dbReference type="GO" id="GO:0046936">
    <property type="term" value="F:2'-deoxyadenosine deaminase activity"/>
    <property type="evidence" value="ECO:0007669"/>
    <property type="project" value="RHEA"/>
</dbReference>
<dbReference type="GO" id="GO:0004000">
    <property type="term" value="F:adenosine deaminase activity"/>
    <property type="evidence" value="ECO:0007669"/>
    <property type="project" value="UniProtKB-UniRule"/>
</dbReference>
<dbReference type="GO" id="GO:0008270">
    <property type="term" value="F:zinc ion binding"/>
    <property type="evidence" value="ECO:0007669"/>
    <property type="project" value="UniProtKB-UniRule"/>
</dbReference>
<dbReference type="GO" id="GO:0006154">
    <property type="term" value="P:adenosine catabolic process"/>
    <property type="evidence" value="ECO:0007669"/>
    <property type="project" value="TreeGrafter"/>
</dbReference>
<dbReference type="GO" id="GO:0043103">
    <property type="term" value="P:hypoxanthine salvage"/>
    <property type="evidence" value="ECO:0007669"/>
    <property type="project" value="TreeGrafter"/>
</dbReference>
<dbReference type="GO" id="GO:0046103">
    <property type="term" value="P:inosine biosynthetic process"/>
    <property type="evidence" value="ECO:0007669"/>
    <property type="project" value="TreeGrafter"/>
</dbReference>
<dbReference type="GO" id="GO:0009117">
    <property type="term" value="P:nucleotide metabolic process"/>
    <property type="evidence" value="ECO:0007669"/>
    <property type="project" value="UniProtKB-KW"/>
</dbReference>
<dbReference type="GO" id="GO:0009168">
    <property type="term" value="P:purine ribonucleoside monophosphate biosynthetic process"/>
    <property type="evidence" value="ECO:0007669"/>
    <property type="project" value="UniProtKB-UniRule"/>
</dbReference>
<dbReference type="FunFam" id="3.20.20.140:FF:000020">
    <property type="entry name" value="Adenosine deaminase"/>
    <property type="match status" value="1"/>
</dbReference>
<dbReference type="Gene3D" id="3.20.20.140">
    <property type="entry name" value="Metal-dependent hydrolases"/>
    <property type="match status" value="1"/>
</dbReference>
<dbReference type="HAMAP" id="MF_00540">
    <property type="entry name" value="A_deaminase"/>
    <property type="match status" value="1"/>
</dbReference>
<dbReference type="InterPro" id="IPR028893">
    <property type="entry name" value="A_deaminase"/>
</dbReference>
<dbReference type="InterPro" id="IPR001365">
    <property type="entry name" value="A_deaminase_dom"/>
</dbReference>
<dbReference type="InterPro" id="IPR006330">
    <property type="entry name" value="Ado/ade_deaminase"/>
</dbReference>
<dbReference type="InterPro" id="IPR032466">
    <property type="entry name" value="Metal_Hydrolase"/>
</dbReference>
<dbReference type="NCBIfam" id="TIGR01430">
    <property type="entry name" value="aden_deam"/>
    <property type="match status" value="1"/>
</dbReference>
<dbReference type="NCBIfam" id="NF006847">
    <property type="entry name" value="PRK09358.1-2"/>
    <property type="match status" value="1"/>
</dbReference>
<dbReference type="PANTHER" id="PTHR11409">
    <property type="entry name" value="ADENOSINE DEAMINASE"/>
    <property type="match status" value="1"/>
</dbReference>
<dbReference type="PANTHER" id="PTHR11409:SF43">
    <property type="entry name" value="ADENOSINE DEAMINASE"/>
    <property type="match status" value="1"/>
</dbReference>
<dbReference type="Pfam" id="PF00962">
    <property type="entry name" value="A_deaminase"/>
    <property type="match status" value="1"/>
</dbReference>
<dbReference type="SUPFAM" id="SSF51556">
    <property type="entry name" value="Metallo-dependent hydrolases"/>
    <property type="match status" value="1"/>
</dbReference>
<comment type="function">
    <text evidence="1">Catalyzes the hydrolytic deamination of adenosine and 2-deoxyadenosine.</text>
</comment>
<comment type="catalytic activity">
    <reaction evidence="1">
        <text>adenosine + H2O + H(+) = inosine + NH4(+)</text>
        <dbReference type="Rhea" id="RHEA:24408"/>
        <dbReference type="ChEBI" id="CHEBI:15377"/>
        <dbReference type="ChEBI" id="CHEBI:15378"/>
        <dbReference type="ChEBI" id="CHEBI:16335"/>
        <dbReference type="ChEBI" id="CHEBI:17596"/>
        <dbReference type="ChEBI" id="CHEBI:28938"/>
        <dbReference type="EC" id="3.5.4.4"/>
    </reaction>
    <physiologicalReaction direction="left-to-right" evidence="1">
        <dbReference type="Rhea" id="RHEA:24409"/>
    </physiologicalReaction>
</comment>
<comment type="catalytic activity">
    <reaction evidence="1">
        <text>2'-deoxyadenosine + H2O + H(+) = 2'-deoxyinosine + NH4(+)</text>
        <dbReference type="Rhea" id="RHEA:28190"/>
        <dbReference type="ChEBI" id="CHEBI:15377"/>
        <dbReference type="ChEBI" id="CHEBI:15378"/>
        <dbReference type="ChEBI" id="CHEBI:17256"/>
        <dbReference type="ChEBI" id="CHEBI:28938"/>
        <dbReference type="ChEBI" id="CHEBI:28997"/>
        <dbReference type="EC" id="3.5.4.4"/>
    </reaction>
    <physiologicalReaction direction="left-to-right" evidence="1">
        <dbReference type="Rhea" id="RHEA:28191"/>
    </physiologicalReaction>
</comment>
<comment type="cofactor">
    <cofactor evidence="1">
        <name>Zn(2+)</name>
        <dbReference type="ChEBI" id="CHEBI:29105"/>
    </cofactor>
    <text evidence="1">Binds 1 zinc ion per subunit.</text>
</comment>
<comment type="similarity">
    <text evidence="1">Belongs to the metallo-dependent hydrolases superfamily. Adenosine and AMP deaminases family. Adenosine deaminase subfamily.</text>
</comment>
<evidence type="ECO:0000255" key="1">
    <source>
        <dbReference type="HAMAP-Rule" id="MF_00540"/>
    </source>
</evidence>
<organism>
    <name type="scientific">Mycolicibacterium paratuberculosis (strain ATCC BAA-968 / K-10)</name>
    <name type="common">Mycobacterium paratuberculosis</name>
    <dbReference type="NCBI Taxonomy" id="262316"/>
    <lineage>
        <taxon>Bacteria</taxon>
        <taxon>Bacillati</taxon>
        <taxon>Actinomycetota</taxon>
        <taxon>Actinomycetes</taxon>
        <taxon>Mycobacteriales</taxon>
        <taxon>Mycobacteriaceae</taxon>
        <taxon>Mycobacterium</taxon>
        <taxon>Mycobacterium avium complex (MAC)</taxon>
    </lineage>
</organism>
<keyword id="KW-0378">Hydrolase</keyword>
<keyword id="KW-0479">Metal-binding</keyword>
<keyword id="KW-0546">Nucleotide metabolism</keyword>
<keyword id="KW-1185">Reference proteome</keyword>
<keyword id="KW-0862">Zinc</keyword>